<dbReference type="EMBL" id="CU329670">
    <property type="protein sequence ID" value="CAA93557.1"/>
    <property type="molecule type" value="Genomic_DNA"/>
</dbReference>
<dbReference type="PIR" id="T38866">
    <property type="entry name" value="T38866"/>
</dbReference>
<dbReference type="RefSeq" id="NP_593689.1">
    <property type="nucleotide sequence ID" value="NM_001019121.2"/>
</dbReference>
<dbReference type="STRING" id="284812.Q10240"/>
<dbReference type="PaxDb" id="4896-SPAC4G9.07.1"/>
<dbReference type="EnsemblFungi" id="SPAC4G9.07.1">
    <property type="protein sequence ID" value="SPAC4G9.07.1:pep"/>
    <property type="gene ID" value="SPAC4G9.07"/>
</dbReference>
<dbReference type="GeneID" id="2543433"/>
<dbReference type="KEGG" id="spo:2543433"/>
<dbReference type="PomBase" id="SPAC4G9.07">
    <property type="gene designation" value="mug133"/>
</dbReference>
<dbReference type="VEuPathDB" id="FungiDB:SPAC4G9.07"/>
<dbReference type="HOGENOM" id="CLU_038731_0_0_1"/>
<dbReference type="InParanoid" id="Q10240"/>
<dbReference type="OMA" id="LLESCYC"/>
<dbReference type="PhylomeDB" id="Q10240"/>
<dbReference type="PRO" id="PR:Q10240"/>
<dbReference type="Proteomes" id="UP000002485">
    <property type="component" value="Chromosome I"/>
</dbReference>
<dbReference type="GO" id="GO:0005794">
    <property type="term" value="C:Golgi apparatus"/>
    <property type="evidence" value="ECO:0007005"/>
    <property type="project" value="PomBase"/>
</dbReference>
<dbReference type="GO" id="GO:0005774">
    <property type="term" value="C:vacuolar membrane"/>
    <property type="evidence" value="ECO:0007669"/>
    <property type="project" value="UniProtKB-SubCell"/>
</dbReference>
<dbReference type="GO" id="GO:0051321">
    <property type="term" value="P:meiotic cell cycle"/>
    <property type="evidence" value="ECO:0007669"/>
    <property type="project" value="UniProtKB-KW"/>
</dbReference>
<dbReference type="InterPro" id="IPR013903">
    <property type="entry name" value="Meiotic_expression"/>
</dbReference>
<dbReference type="Pfam" id="PF08594">
    <property type="entry name" value="UPF0300"/>
    <property type="match status" value="1"/>
</dbReference>
<sequence>MEECKLDINKGKDAEILYEEYKYHEIKEMSFSSCARTSPELLKKFGCDAHVITSVEGAPKKENKKIWEFFKGSNKIKNLFTMFTCCFANDEEEIWGEETNESVVYKEYTYNSRWKIEIPSYPVREIPYVVADTPYNKLLCPLSSLEWVSKLILMDNANSIGMKNNRYSTNPFIYGMCYIIRNNANRILLESCYCENSTGMSTCPRILEFMPYEPLLKYNSYRLLSTYENSYKELSEMLTNNNAPLEVLIHHVMLYHYYPSFLQSALWTAVSSYLEERCNNGLYSKLLVKAAKQHFGDIRLYFVTPDDIYTFDHCNNWIAIVTRNFMAYIETKRKLEFDSIPFNCPLITQLFPLISSPKEMAWLLLIVCTDSNESWFPVHAYINTKTRILRPRSPKLDFFLKESDLLYFQDKQSISEFDIIRKDLLEDLIQCDSYVNTREQLRRRRETLNRKRITIAKLQNNHSQITFPYKRHNIHKSVDSIQFCKPASNLLTLKDNSYTQIPLEPLLLAEISV</sequence>
<protein>
    <recommendedName>
        <fullName>Meiotically up-regulated gene 133 protein</fullName>
    </recommendedName>
</protein>
<feature type="chain" id="PRO_0000118857" description="Meiotically up-regulated gene 133 protein">
    <location>
        <begin position="1"/>
        <end position="513"/>
    </location>
</feature>
<evidence type="ECO:0000269" key="1">
    <source>
    </source>
</evidence>
<evidence type="ECO:0000269" key="2">
    <source>
    </source>
</evidence>
<evidence type="ECO:0000305" key="3"/>
<comment type="function">
    <text evidence="1">Has a role in meiosis.</text>
</comment>
<comment type="subcellular location">
    <subcellularLocation>
        <location evidence="2">Golgi apparatus</location>
    </subcellularLocation>
    <subcellularLocation>
        <location evidence="2">Vacuole membrane</location>
    </subcellularLocation>
</comment>
<comment type="similarity">
    <text evidence="3">Belongs to the UPF0300 family.</text>
</comment>
<keyword id="KW-0333">Golgi apparatus</keyword>
<keyword id="KW-0469">Meiosis</keyword>
<keyword id="KW-0472">Membrane</keyword>
<keyword id="KW-1185">Reference proteome</keyword>
<keyword id="KW-0926">Vacuole</keyword>
<proteinExistence type="evidence at protein level"/>
<name>MU133_SCHPO</name>
<organism>
    <name type="scientific">Schizosaccharomyces pombe (strain 972 / ATCC 24843)</name>
    <name type="common">Fission yeast</name>
    <dbReference type="NCBI Taxonomy" id="284812"/>
    <lineage>
        <taxon>Eukaryota</taxon>
        <taxon>Fungi</taxon>
        <taxon>Dikarya</taxon>
        <taxon>Ascomycota</taxon>
        <taxon>Taphrinomycotina</taxon>
        <taxon>Schizosaccharomycetes</taxon>
        <taxon>Schizosaccharomycetales</taxon>
        <taxon>Schizosaccharomycetaceae</taxon>
        <taxon>Schizosaccharomyces</taxon>
    </lineage>
</organism>
<reference key="1">
    <citation type="journal article" date="2002" name="Nature">
        <title>The genome sequence of Schizosaccharomyces pombe.</title>
        <authorList>
            <person name="Wood V."/>
            <person name="Gwilliam R."/>
            <person name="Rajandream M.A."/>
            <person name="Lyne M.H."/>
            <person name="Lyne R."/>
            <person name="Stewart A."/>
            <person name="Sgouros J.G."/>
            <person name="Peat N."/>
            <person name="Hayles J."/>
            <person name="Baker S.G."/>
            <person name="Basham D."/>
            <person name="Bowman S."/>
            <person name="Brooks K."/>
            <person name="Brown D."/>
            <person name="Brown S."/>
            <person name="Chillingworth T."/>
            <person name="Churcher C.M."/>
            <person name="Collins M."/>
            <person name="Connor R."/>
            <person name="Cronin A."/>
            <person name="Davis P."/>
            <person name="Feltwell T."/>
            <person name="Fraser A."/>
            <person name="Gentles S."/>
            <person name="Goble A."/>
            <person name="Hamlin N."/>
            <person name="Harris D.E."/>
            <person name="Hidalgo J."/>
            <person name="Hodgson G."/>
            <person name="Holroyd S."/>
            <person name="Hornsby T."/>
            <person name="Howarth S."/>
            <person name="Huckle E.J."/>
            <person name="Hunt S."/>
            <person name="Jagels K."/>
            <person name="James K.D."/>
            <person name="Jones L."/>
            <person name="Jones M."/>
            <person name="Leather S."/>
            <person name="McDonald S."/>
            <person name="McLean J."/>
            <person name="Mooney P."/>
            <person name="Moule S."/>
            <person name="Mungall K.L."/>
            <person name="Murphy L.D."/>
            <person name="Niblett D."/>
            <person name="Odell C."/>
            <person name="Oliver K."/>
            <person name="O'Neil S."/>
            <person name="Pearson D."/>
            <person name="Quail M.A."/>
            <person name="Rabbinowitsch E."/>
            <person name="Rutherford K.M."/>
            <person name="Rutter S."/>
            <person name="Saunders D."/>
            <person name="Seeger K."/>
            <person name="Sharp S."/>
            <person name="Skelton J."/>
            <person name="Simmonds M.N."/>
            <person name="Squares R."/>
            <person name="Squares S."/>
            <person name="Stevens K."/>
            <person name="Taylor K."/>
            <person name="Taylor R.G."/>
            <person name="Tivey A."/>
            <person name="Walsh S.V."/>
            <person name="Warren T."/>
            <person name="Whitehead S."/>
            <person name="Woodward J.R."/>
            <person name="Volckaert G."/>
            <person name="Aert R."/>
            <person name="Robben J."/>
            <person name="Grymonprez B."/>
            <person name="Weltjens I."/>
            <person name="Vanstreels E."/>
            <person name="Rieger M."/>
            <person name="Schaefer M."/>
            <person name="Mueller-Auer S."/>
            <person name="Gabel C."/>
            <person name="Fuchs M."/>
            <person name="Duesterhoeft A."/>
            <person name="Fritzc C."/>
            <person name="Holzer E."/>
            <person name="Moestl D."/>
            <person name="Hilbert H."/>
            <person name="Borzym K."/>
            <person name="Langer I."/>
            <person name="Beck A."/>
            <person name="Lehrach H."/>
            <person name="Reinhardt R."/>
            <person name="Pohl T.M."/>
            <person name="Eger P."/>
            <person name="Zimmermann W."/>
            <person name="Wedler H."/>
            <person name="Wambutt R."/>
            <person name="Purnelle B."/>
            <person name="Goffeau A."/>
            <person name="Cadieu E."/>
            <person name="Dreano S."/>
            <person name="Gloux S."/>
            <person name="Lelaure V."/>
            <person name="Mottier S."/>
            <person name="Galibert F."/>
            <person name="Aves S.J."/>
            <person name="Xiang Z."/>
            <person name="Hunt C."/>
            <person name="Moore K."/>
            <person name="Hurst S.M."/>
            <person name="Lucas M."/>
            <person name="Rochet M."/>
            <person name="Gaillardin C."/>
            <person name="Tallada V.A."/>
            <person name="Garzon A."/>
            <person name="Thode G."/>
            <person name="Daga R.R."/>
            <person name="Cruzado L."/>
            <person name="Jimenez J."/>
            <person name="Sanchez M."/>
            <person name="del Rey F."/>
            <person name="Benito J."/>
            <person name="Dominguez A."/>
            <person name="Revuelta J.L."/>
            <person name="Moreno S."/>
            <person name="Armstrong J."/>
            <person name="Forsburg S.L."/>
            <person name="Cerutti L."/>
            <person name="Lowe T."/>
            <person name="McCombie W.R."/>
            <person name="Paulsen I."/>
            <person name="Potashkin J."/>
            <person name="Shpakovski G.V."/>
            <person name="Ussery D."/>
            <person name="Barrell B.G."/>
            <person name="Nurse P."/>
        </authorList>
    </citation>
    <scope>NUCLEOTIDE SEQUENCE [LARGE SCALE GENOMIC DNA]</scope>
    <source>
        <strain>972 / ATCC 24843</strain>
    </source>
</reference>
<reference key="2">
    <citation type="journal article" date="2005" name="Curr. Biol.">
        <title>A large-scale screen in S. pombe identifies seven novel genes required for critical meiotic events.</title>
        <authorList>
            <person name="Martin-Castellanos C."/>
            <person name="Blanco M."/>
            <person name="Rozalen A.E."/>
            <person name="Perez-Hidalgo L."/>
            <person name="Garcia A.I."/>
            <person name="Conde F."/>
            <person name="Mata J."/>
            <person name="Ellermeier C."/>
            <person name="Davis L."/>
            <person name="San-Segundo P."/>
            <person name="Smith G.R."/>
            <person name="Moreno S."/>
        </authorList>
    </citation>
    <scope>FUNCTION IN MEIOSIS</scope>
</reference>
<reference key="3">
    <citation type="journal article" date="2006" name="Nat. Biotechnol.">
        <title>ORFeome cloning and global analysis of protein localization in the fission yeast Schizosaccharomyces pombe.</title>
        <authorList>
            <person name="Matsuyama A."/>
            <person name="Arai R."/>
            <person name="Yashiroda Y."/>
            <person name="Shirai A."/>
            <person name="Kamata A."/>
            <person name="Sekido S."/>
            <person name="Kobayashi Y."/>
            <person name="Hashimoto A."/>
            <person name="Hamamoto M."/>
            <person name="Hiraoka Y."/>
            <person name="Horinouchi S."/>
            <person name="Yoshida M."/>
        </authorList>
    </citation>
    <scope>SUBCELLULAR LOCATION [LARGE SCALE ANALYSIS]</scope>
</reference>
<gene>
    <name type="primary">mug133</name>
    <name type="ORF">SPAC4G9.07</name>
</gene>
<accession>Q10240</accession>